<organism>
    <name type="scientific">Salmonella dublin (strain CT_02021853)</name>
    <dbReference type="NCBI Taxonomy" id="439851"/>
    <lineage>
        <taxon>Bacteria</taxon>
        <taxon>Pseudomonadati</taxon>
        <taxon>Pseudomonadota</taxon>
        <taxon>Gammaproteobacteria</taxon>
        <taxon>Enterobacterales</taxon>
        <taxon>Enterobacteriaceae</taxon>
        <taxon>Salmonella</taxon>
    </lineage>
</organism>
<keyword id="KW-0963">Cytoplasm</keyword>
<keyword id="KW-0255">Endonuclease</keyword>
<keyword id="KW-0378">Hydrolase</keyword>
<keyword id="KW-0464">Manganese</keyword>
<keyword id="KW-0479">Metal-binding</keyword>
<keyword id="KW-0540">Nuclease</keyword>
<feature type="chain" id="PRO_1000091649" description="Ribonuclease HII">
    <location>
        <begin position="1"/>
        <end position="198"/>
    </location>
</feature>
<feature type="domain" description="RNase H type-2" evidence="2">
    <location>
        <begin position="10"/>
        <end position="198"/>
    </location>
</feature>
<feature type="binding site" evidence="1">
    <location>
        <position position="16"/>
    </location>
    <ligand>
        <name>a divalent metal cation</name>
        <dbReference type="ChEBI" id="CHEBI:60240"/>
    </ligand>
</feature>
<feature type="binding site" evidence="1">
    <location>
        <position position="17"/>
    </location>
    <ligand>
        <name>a divalent metal cation</name>
        <dbReference type="ChEBI" id="CHEBI:60240"/>
    </ligand>
</feature>
<feature type="binding site" evidence="1">
    <location>
        <position position="108"/>
    </location>
    <ligand>
        <name>a divalent metal cation</name>
        <dbReference type="ChEBI" id="CHEBI:60240"/>
    </ligand>
</feature>
<comment type="function">
    <text evidence="1">Endonuclease that specifically degrades the RNA of RNA-DNA hybrids.</text>
</comment>
<comment type="catalytic activity">
    <reaction evidence="1">
        <text>Endonucleolytic cleavage to 5'-phosphomonoester.</text>
        <dbReference type="EC" id="3.1.26.4"/>
    </reaction>
</comment>
<comment type="cofactor">
    <cofactor evidence="1">
        <name>Mn(2+)</name>
        <dbReference type="ChEBI" id="CHEBI:29035"/>
    </cofactor>
    <cofactor evidence="1">
        <name>Mg(2+)</name>
        <dbReference type="ChEBI" id="CHEBI:18420"/>
    </cofactor>
    <text evidence="1">Manganese or magnesium. Binds 1 divalent metal ion per monomer in the absence of substrate. May bind a second metal ion after substrate binding.</text>
</comment>
<comment type="subcellular location">
    <subcellularLocation>
        <location evidence="1">Cytoplasm</location>
    </subcellularLocation>
</comment>
<comment type="similarity">
    <text evidence="1">Belongs to the RNase HII family.</text>
</comment>
<proteinExistence type="inferred from homology"/>
<name>RNH2_SALDC</name>
<evidence type="ECO:0000255" key="1">
    <source>
        <dbReference type="HAMAP-Rule" id="MF_00052"/>
    </source>
</evidence>
<evidence type="ECO:0000255" key="2">
    <source>
        <dbReference type="PROSITE-ProRule" id="PRU01319"/>
    </source>
</evidence>
<accession>B5FJ30</accession>
<sequence length="198" mass="21507">MIEFVYPHTHLVAGVDEVGRGPLVGAVVTAAVILDPARPIVGLNDSKKLSEKRRLSLYDEIKEKALSWSLGRAEAHEIDELNILHATMLAMQRAVAGLHIAPEYVLIDGNRCPELPVPSMAVVKGDSRVAEISAASILAKVTRDAEMAALDIVFPQYGFAQHKGYPTAFHLEKLAQYGATAHHRRSFAPVKRALGLVS</sequence>
<gene>
    <name evidence="1" type="primary">rnhB</name>
    <name type="ordered locus">SeD_A0252</name>
</gene>
<reference key="1">
    <citation type="journal article" date="2011" name="J. Bacteriol.">
        <title>Comparative genomics of 28 Salmonella enterica isolates: evidence for CRISPR-mediated adaptive sublineage evolution.</title>
        <authorList>
            <person name="Fricke W.F."/>
            <person name="Mammel M.K."/>
            <person name="McDermott P.F."/>
            <person name="Tartera C."/>
            <person name="White D.G."/>
            <person name="Leclerc J.E."/>
            <person name="Ravel J."/>
            <person name="Cebula T.A."/>
        </authorList>
    </citation>
    <scope>NUCLEOTIDE SEQUENCE [LARGE SCALE GENOMIC DNA]</scope>
    <source>
        <strain>CT_02021853</strain>
    </source>
</reference>
<dbReference type="EC" id="3.1.26.4" evidence="1"/>
<dbReference type="EMBL" id="CP001144">
    <property type="protein sequence ID" value="ACH75033.1"/>
    <property type="molecule type" value="Genomic_DNA"/>
</dbReference>
<dbReference type="RefSeq" id="WP_000569412.1">
    <property type="nucleotide sequence ID" value="NC_011205.1"/>
</dbReference>
<dbReference type="SMR" id="B5FJ30"/>
<dbReference type="KEGG" id="sed:SeD_A0252"/>
<dbReference type="HOGENOM" id="CLU_036532_3_2_6"/>
<dbReference type="Proteomes" id="UP000008322">
    <property type="component" value="Chromosome"/>
</dbReference>
<dbReference type="GO" id="GO:0005737">
    <property type="term" value="C:cytoplasm"/>
    <property type="evidence" value="ECO:0007669"/>
    <property type="project" value="UniProtKB-SubCell"/>
</dbReference>
<dbReference type="GO" id="GO:0032299">
    <property type="term" value="C:ribonuclease H2 complex"/>
    <property type="evidence" value="ECO:0007669"/>
    <property type="project" value="TreeGrafter"/>
</dbReference>
<dbReference type="GO" id="GO:0030145">
    <property type="term" value="F:manganese ion binding"/>
    <property type="evidence" value="ECO:0007669"/>
    <property type="project" value="UniProtKB-UniRule"/>
</dbReference>
<dbReference type="GO" id="GO:0003723">
    <property type="term" value="F:RNA binding"/>
    <property type="evidence" value="ECO:0007669"/>
    <property type="project" value="InterPro"/>
</dbReference>
<dbReference type="GO" id="GO:0004523">
    <property type="term" value="F:RNA-DNA hybrid ribonuclease activity"/>
    <property type="evidence" value="ECO:0007669"/>
    <property type="project" value="UniProtKB-UniRule"/>
</dbReference>
<dbReference type="GO" id="GO:0043137">
    <property type="term" value="P:DNA replication, removal of RNA primer"/>
    <property type="evidence" value="ECO:0007669"/>
    <property type="project" value="TreeGrafter"/>
</dbReference>
<dbReference type="GO" id="GO:0006298">
    <property type="term" value="P:mismatch repair"/>
    <property type="evidence" value="ECO:0007669"/>
    <property type="project" value="TreeGrafter"/>
</dbReference>
<dbReference type="CDD" id="cd07182">
    <property type="entry name" value="RNase_HII_bacteria_HII_like"/>
    <property type="match status" value="1"/>
</dbReference>
<dbReference type="FunFam" id="3.30.420.10:FF:000006">
    <property type="entry name" value="Ribonuclease HII"/>
    <property type="match status" value="1"/>
</dbReference>
<dbReference type="Gene3D" id="3.30.420.10">
    <property type="entry name" value="Ribonuclease H-like superfamily/Ribonuclease H"/>
    <property type="match status" value="1"/>
</dbReference>
<dbReference type="HAMAP" id="MF_00052_B">
    <property type="entry name" value="RNase_HII_B"/>
    <property type="match status" value="1"/>
</dbReference>
<dbReference type="InterPro" id="IPR022898">
    <property type="entry name" value="RNase_HII"/>
</dbReference>
<dbReference type="InterPro" id="IPR001352">
    <property type="entry name" value="RNase_HII/HIII"/>
</dbReference>
<dbReference type="InterPro" id="IPR024567">
    <property type="entry name" value="RNase_HII/HIII_dom"/>
</dbReference>
<dbReference type="InterPro" id="IPR012337">
    <property type="entry name" value="RNaseH-like_sf"/>
</dbReference>
<dbReference type="InterPro" id="IPR036397">
    <property type="entry name" value="RNaseH_sf"/>
</dbReference>
<dbReference type="NCBIfam" id="NF000594">
    <property type="entry name" value="PRK00015.1-1"/>
    <property type="match status" value="1"/>
</dbReference>
<dbReference type="NCBIfam" id="NF000595">
    <property type="entry name" value="PRK00015.1-3"/>
    <property type="match status" value="1"/>
</dbReference>
<dbReference type="NCBIfam" id="NF000596">
    <property type="entry name" value="PRK00015.1-4"/>
    <property type="match status" value="1"/>
</dbReference>
<dbReference type="PANTHER" id="PTHR10954">
    <property type="entry name" value="RIBONUCLEASE H2 SUBUNIT A"/>
    <property type="match status" value="1"/>
</dbReference>
<dbReference type="PANTHER" id="PTHR10954:SF18">
    <property type="entry name" value="RIBONUCLEASE HII"/>
    <property type="match status" value="1"/>
</dbReference>
<dbReference type="Pfam" id="PF01351">
    <property type="entry name" value="RNase_HII"/>
    <property type="match status" value="1"/>
</dbReference>
<dbReference type="SUPFAM" id="SSF53098">
    <property type="entry name" value="Ribonuclease H-like"/>
    <property type="match status" value="1"/>
</dbReference>
<dbReference type="PROSITE" id="PS51975">
    <property type="entry name" value="RNASE_H_2"/>
    <property type="match status" value="1"/>
</dbReference>
<protein>
    <recommendedName>
        <fullName evidence="1">Ribonuclease HII</fullName>
        <shortName evidence="1">RNase HII</shortName>
        <ecNumber evidence="1">3.1.26.4</ecNumber>
    </recommendedName>
</protein>